<reference key="1">
    <citation type="journal article" date="2005" name="J. Bacteriol.">
        <title>Genomic sequence of an otitis media isolate of nontypeable Haemophilus influenzae: comparative study with H. influenzae serotype d, strain KW20.</title>
        <authorList>
            <person name="Harrison A."/>
            <person name="Dyer D.W."/>
            <person name="Gillaspy A."/>
            <person name="Ray W.C."/>
            <person name="Mungur R."/>
            <person name="Carson M.B."/>
            <person name="Zhong H."/>
            <person name="Gipson J."/>
            <person name="Gipson M."/>
            <person name="Johnson L.S."/>
            <person name="Lewis L."/>
            <person name="Bakaletz L.O."/>
            <person name="Munson R.S. Jr."/>
        </authorList>
    </citation>
    <scope>NUCLEOTIDE SEQUENCE [LARGE SCALE GENOMIC DNA]</scope>
    <source>
        <strain>86-028NP</strain>
    </source>
</reference>
<organism>
    <name type="scientific">Haemophilus influenzae (strain 86-028NP)</name>
    <dbReference type="NCBI Taxonomy" id="281310"/>
    <lineage>
        <taxon>Bacteria</taxon>
        <taxon>Pseudomonadati</taxon>
        <taxon>Pseudomonadota</taxon>
        <taxon>Gammaproteobacteria</taxon>
        <taxon>Pasteurellales</taxon>
        <taxon>Pasteurellaceae</taxon>
        <taxon>Haemophilus</taxon>
    </lineage>
</organism>
<evidence type="ECO:0000255" key="1">
    <source>
        <dbReference type="HAMAP-Rule" id="MF_00020"/>
    </source>
</evidence>
<accession>Q4QL95</accession>
<comment type="function">
    <text evidence="1">Catalyzes the formation of acetyl phosphate from acetate and ATP. Can also catalyze the reverse reaction.</text>
</comment>
<comment type="catalytic activity">
    <reaction evidence="1">
        <text>acetate + ATP = acetyl phosphate + ADP</text>
        <dbReference type="Rhea" id="RHEA:11352"/>
        <dbReference type="ChEBI" id="CHEBI:22191"/>
        <dbReference type="ChEBI" id="CHEBI:30089"/>
        <dbReference type="ChEBI" id="CHEBI:30616"/>
        <dbReference type="ChEBI" id="CHEBI:456216"/>
        <dbReference type="EC" id="2.7.2.1"/>
    </reaction>
</comment>
<comment type="cofactor">
    <cofactor evidence="1">
        <name>Mg(2+)</name>
        <dbReference type="ChEBI" id="CHEBI:18420"/>
    </cofactor>
    <cofactor evidence="1">
        <name>Mn(2+)</name>
        <dbReference type="ChEBI" id="CHEBI:29035"/>
    </cofactor>
    <text evidence="1">Mg(2+). Can also accept Mn(2+).</text>
</comment>
<comment type="pathway">
    <text evidence="1">Metabolic intermediate biosynthesis; acetyl-CoA biosynthesis; acetyl-CoA from acetate: step 1/2.</text>
</comment>
<comment type="subunit">
    <text evidence="1">Homodimer.</text>
</comment>
<comment type="subcellular location">
    <subcellularLocation>
        <location evidence="1">Cytoplasm</location>
    </subcellularLocation>
</comment>
<comment type="similarity">
    <text evidence="1">Belongs to the acetokinase family.</text>
</comment>
<sequence length="401" mass="43631">MSKLVLILNCGSSSLKFAILDPATGEEKLSGLAEAFFLPEARIKWKLNGEKGNADLGAGAAHTEALNFIASNILTDELKNSIAAIGHRIVHGGEKYTQSVIVTDEVVKGIEDAAQFAPLHNPAHLIGIREAFNAFPHLKDKNVVVFDTAFHQTMSEEAFLYALPYSLYKEHGVRRYGAHGTSHYFISREVAEYVGKPADQVNAIICHLGNGGSVSVVRNGQCIDTSMGLTPLEGLVMGTRCGDIDPAIVFYLYKTLGMSMEQIEETLVKKSGLLGLTEVTSDCRYAEDNYDNASKPEAKRALNVYSYRLAKYIGAYMAVLGDDHLDAIAFTGGIGENSAHVRELALNHLKLFGIKIDNERNLAARFGKDGVITTDDSAFKAIVLPTNEELVIAQDTARLCF</sequence>
<keyword id="KW-0067">ATP-binding</keyword>
<keyword id="KW-0963">Cytoplasm</keyword>
<keyword id="KW-0418">Kinase</keyword>
<keyword id="KW-0460">Magnesium</keyword>
<keyword id="KW-0479">Metal-binding</keyword>
<keyword id="KW-0547">Nucleotide-binding</keyword>
<keyword id="KW-0808">Transferase</keyword>
<name>ACKA_HAEI8</name>
<dbReference type="EC" id="2.7.2.1" evidence="1"/>
<dbReference type="EMBL" id="CP000057">
    <property type="protein sequence ID" value="AAX88202.1"/>
    <property type="molecule type" value="Genomic_DNA"/>
</dbReference>
<dbReference type="RefSeq" id="WP_011272441.1">
    <property type="nucleotide sequence ID" value="NC_007146.2"/>
</dbReference>
<dbReference type="SMR" id="Q4QL95"/>
<dbReference type="GeneID" id="93220207"/>
<dbReference type="KEGG" id="hit:NTHI1375"/>
<dbReference type="HOGENOM" id="CLU_020352_0_1_6"/>
<dbReference type="UniPathway" id="UPA00340">
    <property type="reaction ID" value="UER00458"/>
</dbReference>
<dbReference type="Proteomes" id="UP000002525">
    <property type="component" value="Chromosome"/>
</dbReference>
<dbReference type="GO" id="GO:0005829">
    <property type="term" value="C:cytosol"/>
    <property type="evidence" value="ECO:0007669"/>
    <property type="project" value="TreeGrafter"/>
</dbReference>
<dbReference type="GO" id="GO:0008776">
    <property type="term" value="F:acetate kinase activity"/>
    <property type="evidence" value="ECO:0007669"/>
    <property type="project" value="UniProtKB-UniRule"/>
</dbReference>
<dbReference type="GO" id="GO:0005524">
    <property type="term" value="F:ATP binding"/>
    <property type="evidence" value="ECO:0007669"/>
    <property type="project" value="UniProtKB-KW"/>
</dbReference>
<dbReference type="GO" id="GO:0000287">
    <property type="term" value="F:magnesium ion binding"/>
    <property type="evidence" value="ECO:0007669"/>
    <property type="project" value="UniProtKB-UniRule"/>
</dbReference>
<dbReference type="GO" id="GO:0006083">
    <property type="term" value="P:acetate metabolic process"/>
    <property type="evidence" value="ECO:0007669"/>
    <property type="project" value="TreeGrafter"/>
</dbReference>
<dbReference type="GO" id="GO:0006085">
    <property type="term" value="P:acetyl-CoA biosynthetic process"/>
    <property type="evidence" value="ECO:0007669"/>
    <property type="project" value="UniProtKB-UniRule"/>
</dbReference>
<dbReference type="CDD" id="cd24010">
    <property type="entry name" value="ASKHA_NBD_AcK_PK"/>
    <property type="match status" value="1"/>
</dbReference>
<dbReference type="FunFam" id="3.30.420.40:FF:000041">
    <property type="entry name" value="Acetate kinase"/>
    <property type="match status" value="1"/>
</dbReference>
<dbReference type="FunFam" id="3.30.420.40:FF:000042">
    <property type="entry name" value="Acetate kinase"/>
    <property type="match status" value="1"/>
</dbReference>
<dbReference type="Gene3D" id="3.30.420.40">
    <property type="match status" value="2"/>
</dbReference>
<dbReference type="HAMAP" id="MF_00020">
    <property type="entry name" value="Acetate_kinase"/>
    <property type="match status" value="1"/>
</dbReference>
<dbReference type="InterPro" id="IPR004372">
    <property type="entry name" value="Ac/propionate_kinase"/>
</dbReference>
<dbReference type="InterPro" id="IPR000890">
    <property type="entry name" value="Aliphatic_acid_kin_short-chain"/>
</dbReference>
<dbReference type="InterPro" id="IPR023865">
    <property type="entry name" value="Aliphatic_acid_kinase_CS"/>
</dbReference>
<dbReference type="InterPro" id="IPR043129">
    <property type="entry name" value="ATPase_NBD"/>
</dbReference>
<dbReference type="NCBIfam" id="TIGR00016">
    <property type="entry name" value="ackA"/>
    <property type="match status" value="1"/>
</dbReference>
<dbReference type="PANTHER" id="PTHR21060">
    <property type="entry name" value="ACETATE KINASE"/>
    <property type="match status" value="1"/>
</dbReference>
<dbReference type="PANTHER" id="PTHR21060:SF21">
    <property type="entry name" value="ACETATE KINASE"/>
    <property type="match status" value="1"/>
</dbReference>
<dbReference type="Pfam" id="PF00871">
    <property type="entry name" value="Acetate_kinase"/>
    <property type="match status" value="1"/>
</dbReference>
<dbReference type="PIRSF" id="PIRSF000722">
    <property type="entry name" value="Acetate_prop_kin"/>
    <property type="match status" value="1"/>
</dbReference>
<dbReference type="PRINTS" id="PR00471">
    <property type="entry name" value="ACETATEKNASE"/>
</dbReference>
<dbReference type="SUPFAM" id="SSF53067">
    <property type="entry name" value="Actin-like ATPase domain"/>
    <property type="match status" value="2"/>
</dbReference>
<dbReference type="PROSITE" id="PS01075">
    <property type="entry name" value="ACETATE_KINASE_1"/>
    <property type="match status" value="1"/>
</dbReference>
<dbReference type="PROSITE" id="PS01076">
    <property type="entry name" value="ACETATE_KINASE_2"/>
    <property type="match status" value="1"/>
</dbReference>
<proteinExistence type="inferred from homology"/>
<feature type="chain" id="PRO_0000107566" description="Acetate kinase">
    <location>
        <begin position="1"/>
        <end position="401"/>
    </location>
</feature>
<feature type="active site" description="Proton donor/acceptor" evidence="1">
    <location>
        <position position="147"/>
    </location>
</feature>
<feature type="binding site" evidence="1">
    <location>
        <position position="9"/>
    </location>
    <ligand>
        <name>Mg(2+)</name>
        <dbReference type="ChEBI" id="CHEBI:18420"/>
    </ligand>
</feature>
<feature type="binding site" evidence="1">
    <location>
        <position position="16"/>
    </location>
    <ligand>
        <name>ATP</name>
        <dbReference type="ChEBI" id="CHEBI:30616"/>
    </ligand>
</feature>
<feature type="binding site" evidence="1">
    <location>
        <position position="88"/>
    </location>
    <ligand>
        <name>substrate</name>
    </ligand>
</feature>
<feature type="binding site" evidence="1">
    <location>
        <begin position="207"/>
        <end position="211"/>
    </location>
    <ligand>
        <name>ATP</name>
        <dbReference type="ChEBI" id="CHEBI:30616"/>
    </ligand>
</feature>
<feature type="binding site" evidence="1">
    <location>
        <begin position="282"/>
        <end position="284"/>
    </location>
    <ligand>
        <name>ATP</name>
        <dbReference type="ChEBI" id="CHEBI:30616"/>
    </ligand>
</feature>
<feature type="binding site" evidence="1">
    <location>
        <begin position="333"/>
        <end position="337"/>
    </location>
    <ligand>
        <name>ATP</name>
        <dbReference type="ChEBI" id="CHEBI:30616"/>
    </ligand>
</feature>
<feature type="binding site" evidence="1">
    <location>
        <position position="388"/>
    </location>
    <ligand>
        <name>Mg(2+)</name>
        <dbReference type="ChEBI" id="CHEBI:18420"/>
    </ligand>
</feature>
<feature type="site" description="Transition state stabilizer" evidence="1">
    <location>
        <position position="179"/>
    </location>
</feature>
<feature type="site" description="Transition state stabilizer" evidence="1">
    <location>
        <position position="240"/>
    </location>
</feature>
<protein>
    <recommendedName>
        <fullName evidence="1">Acetate kinase</fullName>
        <ecNumber evidence="1">2.7.2.1</ecNumber>
    </recommendedName>
    <alternativeName>
        <fullName evidence="1">Acetokinase</fullName>
    </alternativeName>
</protein>
<gene>
    <name evidence="1" type="primary">ackA</name>
    <name type="ordered locus">NTHI1375</name>
</gene>